<proteinExistence type="inferred from homology"/>
<keyword id="KW-0028">Amino-acid biosynthesis</keyword>
<keyword id="KW-0057">Aromatic amino acid biosynthesis</keyword>
<keyword id="KW-0456">Lyase</keyword>
<keyword id="KW-0822">Tryptophan biosynthesis</keyword>
<dbReference type="EC" id="4.2.1.20" evidence="1"/>
<dbReference type="EMBL" id="CP000647">
    <property type="protein sequence ID" value="ABR76686.1"/>
    <property type="molecule type" value="Genomic_DNA"/>
</dbReference>
<dbReference type="RefSeq" id="WP_002901728.1">
    <property type="nucleotide sequence ID" value="NC_009648.1"/>
</dbReference>
<dbReference type="SMR" id="A6T7W5"/>
<dbReference type="STRING" id="272620.KPN_01253"/>
<dbReference type="PaxDb" id="272620-KPN_01253"/>
<dbReference type="EnsemblBacteria" id="ABR76686">
    <property type="protein sequence ID" value="ABR76686"/>
    <property type="gene ID" value="KPN_01253"/>
</dbReference>
<dbReference type="GeneID" id="93273706"/>
<dbReference type="KEGG" id="kpn:KPN_01253"/>
<dbReference type="HOGENOM" id="CLU_016734_0_4_6"/>
<dbReference type="UniPathway" id="UPA00035">
    <property type="reaction ID" value="UER00044"/>
</dbReference>
<dbReference type="Proteomes" id="UP000000265">
    <property type="component" value="Chromosome"/>
</dbReference>
<dbReference type="GO" id="GO:0005829">
    <property type="term" value="C:cytosol"/>
    <property type="evidence" value="ECO:0007669"/>
    <property type="project" value="TreeGrafter"/>
</dbReference>
<dbReference type="GO" id="GO:0004834">
    <property type="term" value="F:tryptophan synthase activity"/>
    <property type="evidence" value="ECO:0007669"/>
    <property type="project" value="UniProtKB-UniRule"/>
</dbReference>
<dbReference type="CDD" id="cd04724">
    <property type="entry name" value="Tryptophan_synthase_alpha"/>
    <property type="match status" value="1"/>
</dbReference>
<dbReference type="FunFam" id="3.20.20.70:FF:000037">
    <property type="entry name" value="Tryptophan synthase alpha chain"/>
    <property type="match status" value="1"/>
</dbReference>
<dbReference type="Gene3D" id="3.20.20.70">
    <property type="entry name" value="Aldolase class I"/>
    <property type="match status" value="1"/>
</dbReference>
<dbReference type="HAMAP" id="MF_00131">
    <property type="entry name" value="Trp_synth_alpha"/>
    <property type="match status" value="1"/>
</dbReference>
<dbReference type="InterPro" id="IPR013785">
    <property type="entry name" value="Aldolase_TIM"/>
</dbReference>
<dbReference type="InterPro" id="IPR011060">
    <property type="entry name" value="RibuloseP-bd_barrel"/>
</dbReference>
<dbReference type="InterPro" id="IPR018204">
    <property type="entry name" value="Trp_synthase_alpha_AS"/>
</dbReference>
<dbReference type="InterPro" id="IPR002028">
    <property type="entry name" value="Trp_synthase_suA"/>
</dbReference>
<dbReference type="NCBIfam" id="TIGR00262">
    <property type="entry name" value="trpA"/>
    <property type="match status" value="1"/>
</dbReference>
<dbReference type="PANTHER" id="PTHR43406:SF1">
    <property type="entry name" value="TRYPTOPHAN SYNTHASE ALPHA CHAIN, CHLOROPLASTIC"/>
    <property type="match status" value="1"/>
</dbReference>
<dbReference type="PANTHER" id="PTHR43406">
    <property type="entry name" value="TRYPTOPHAN SYNTHASE, ALPHA CHAIN"/>
    <property type="match status" value="1"/>
</dbReference>
<dbReference type="Pfam" id="PF00290">
    <property type="entry name" value="Trp_syntA"/>
    <property type="match status" value="1"/>
</dbReference>
<dbReference type="SUPFAM" id="SSF51366">
    <property type="entry name" value="Ribulose-phoshate binding barrel"/>
    <property type="match status" value="1"/>
</dbReference>
<dbReference type="PROSITE" id="PS00167">
    <property type="entry name" value="TRP_SYNTHASE_ALPHA"/>
    <property type="match status" value="1"/>
</dbReference>
<gene>
    <name evidence="1" type="primary">trpA</name>
    <name type="ordered locus">KPN78578_12250</name>
    <name type="ORF">KPN_01253</name>
</gene>
<reference key="1">
    <citation type="submission" date="2006-09" db="EMBL/GenBank/DDBJ databases">
        <authorList>
            <consortium name="The Klebsiella pneumonia Genome Sequencing Project"/>
            <person name="McClelland M."/>
            <person name="Sanderson E.K."/>
            <person name="Spieth J."/>
            <person name="Clifton W.S."/>
            <person name="Latreille P."/>
            <person name="Sabo A."/>
            <person name="Pepin K."/>
            <person name="Bhonagiri V."/>
            <person name="Porwollik S."/>
            <person name="Ali J."/>
            <person name="Wilson R.K."/>
        </authorList>
    </citation>
    <scope>NUCLEOTIDE SEQUENCE [LARGE SCALE GENOMIC DNA]</scope>
    <source>
        <strain>ATCC 700721 / MGH 78578</strain>
    </source>
</reference>
<evidence type="ECO:0000255" key="1">
    <source>
        <dbReference type="HAMAP-Rule" id="MF_00131"/>
    </source>
</evidence>
<protein>
    <recommendedName>
        <fullName evidence="1">Tryptophan synthase alpha chain</fullName>
        <ecNumber evidence="1">4.2.1.20</ecNumber>
    </recommendedName>
</protein>
<accession>A6T7W5</accession>
<sequence length="269" mass="28544">MERYETLFAQLKNRQEGAFVPFVTLGDPGPEQSLKIIDALIEGGADALELGIPFSDPLADGPTIQGAALRAFAAGVTPAQCFEMLAAIRQKHPTIPIGLLMYANLVFSPGIDAFYAQCARVGVDSVLVADVPVEESAPFRQAAMRHNIAPIFICPPNADDDLLRQIASYGRGYTYLLSRAGVTGAENRAALPLHHLVEKLAEYHAAPPLQGFGISAPEQVSAAIDAGAAGAISGSAIVKIIERHLDEPQTMLDELKAFVQSLKAATKTA</sequence>
<comment type="function">
    <text evidence="1">The alpha subunit is responsible for the aldol cleavage of indoleglycerol phosphate to indole and glyceraldehyde 3-phosphate.</text>
</comment>
<comment type="catalytic activity">
    <reaction evidence="1">
        <text>(1S,2R)-1-C-(indol-3-yl)glycerol 3-phosphate + L-serine = D-glyceraldehyde 3-phosphate + L-tryptophan + H2O</text>
        <dbReference type="Rhea" id="RHEA:10532"/>
        <dbReference type="ChEBI" id="CHEBI:15377"/>
        <dbReference type="ChEBI" id="CHEBI:33384"/>
        <dbReference type="ChEBI" id="CHEBI:57912"/>
        <dbReference type="ChEBI" id="CHEBI:58866"/>
        <dbReference type="ChEBI" id="CHEBI:59776"/>
        <dbReference type="EC" id="4.2.1.20"/>
    </reaction>
</comment>
<comment type="pathway">
    <text evidence="1">Amino-acid biosynthesis; L-tryptophan biosynthesis; L-tryptophan from chorismate: step 5/5.</text>
</comment>
<comment type="subunit">
    <text evidence="1">Tetramer of two alpha and two beta chains.</text>
</comment>
<comment type="similarity">
    <text evidence="1">Belongs to the TrpA family.</text>
</comment>
<name>TRPA_KLEP7</name>
<feature type="chain" id="PRO_1000018219" description="Tryptophan synthase alpha chain">
    <location>
        <begin position="1"/>
        <end position="269"/>
    </location>
</feature>
<feature type="active site" description="Proton acceptor" evidence="1">
    <location>
        <position position="49"/>
    </location>
</feature>
<feature type="active site" description="Proton acceptor" evidence="1">
    <location>
        <position position="60"/>
    </location>
</feature>
<organism>
    <name type="scientific">Klebsiella pneumoniae subsp. pneumoniae (strain ATCC 700721 / MGH 78578)</name>
    <dbReference type="NCBI Taxonomy" id="272620"/>
    <lineage>
        <taxon>Bacteria</taxon>
        <taxon>Pseudomonadati</taxon>
        <taxon>Pseudomonadota</taxon>
        <taxon>Gammaproteobacteria</taxon>
        <taxon>Enterobacterales</taxon>
        <taxon>Enterobacteriaceae</taxon>
        <taxon>Klebsiella/Raoultella group</taxon>
        <taxon>Klebsiella</taxon>
        <taxon>Klebsiella pneumoniae complex</taxon>
    </lineage>
</organism>